<accession>Q6GQV0</accession>
<accession>Q9DAZ6</accession>
<proteinExistence type="evidence at protein level"/>
<protein>
    <recommendedName>
        <fullName evidence="5">Tubulin epsilon and delta complex protein 2</fullName>
    </recommendedName>
</protein>
<dbReference type="EMBL" id="AK005395">
    <property type="protein sequence ID" value="BAB23999.1"/>
    <property type="molecule type" value="mRNA"/>
</dbReference>
<dbReference type="EMBL" id="AK146539">
    <property type="protein sequence ID" value="BAE27244.1"/>
    <property type="molecule type" value="mRNA"/>
</dbReference>
<dbReference type="EMBL" id="BC072612">
    <property type="protein sequence ID" value="AAH72612.1"/>
    <property type="molecule type" value="mRNA"/>
</dbReference>
<dbReference type="CCDS" id="CCDS28479.1">
    <molecule id="Q6GQV0-1"/>
</dbReference>
<dbReference type="RefSeq" id="NP_082332.1">
    <molecule id="Q6GQV0-1"/>
    <property type="nucleotide sequence ID" value="NM_028056.2"/>
</dbReference>
<dbReference type="RefSeq" id="XP_011244935.1">
    <property type="nucleotide sequence ID" value="XM_011246633.1"/>
</dbReference>
<dbReference type="RefSeq" id="XP_017173142.1">
    <property type="nucleotide sequence ID" value="XM_017317653.1"/>
</dbReference>
<dbReference type="RefSeq" id="XP_030105918.1">
    <molecule id="Q6GQV0-2"/>
    <property type="nucleotide sequence ID" value="XM_030250058.2"/>
</dbReference>
<dbReference type="SMR" id="Q6GQV0"/>
<dbReference type="BioGRID" id="215094">
    <property type="interactions" value="202"/>
</dbReference>
<dbReference type="FunCoup" id="Q6GQV0">
    <property type="interactions" value="233"/>
</dbReference>
<dbReference type="STRING" id="10090.ENSMUSP00000024930"/>
<dbReference type="GlyGen" id="Q6GQV0">
    <property type="glycosylation" value="1 site, 1 O-linked glycan (1 site)"/>
</dbReference>
<dbReference type="iPTMnet" id="Q6GQV0"/>
<dbReference type="PhosphoSitePlus" id="Q6GQV0"/>
<dbReference type="jPOST" id="Q6GQV0"/>
<dbReference type="PaxDb" id="10090-ENSMUSP00000024930"/>
<dbReference type="ProteomicsDB" id="263100">
    <molecule id="Q6GQV0-1"/>
</dbReference>
<dbReference type="ProteomicsDB" id="263101">
    <molecule id="Q6GQV0-2"/>
</dbReference>
<dbReference type="Antibodypedia" id="62154">
    <property type="antibodies" value="21 antibodies from 9 providers"/>
</dbReference>
<dbReference type="DNASU" id="72016"/>
<dbReference type="Ensembl" id="ENSMUST00000024930.8">
    <molecule id="Q6GQV0-1"/>
    <property type="protein sequence ID" value="ENSMUSP00000024930.8"/>
    <property type="gene ID" value="ENSMUSG00000024118.15"/>
</dbReference>
<dbReference type="GeneID" id="72016"/>
<dbReference type="KEGG" id="mmu:72016"/>
<dbReference type="UCSC" id="uc008ava.1">
    <molecule id="Q6GQV0-1"/>
    <property type="organism name" value="mouse"/>
</dbReference>
<dbReference type="AGR" id="MGI:1919266"/>
<dbReference type="CTD" id="80178"/>
<dbReference type="MGI" id="MGI:1919266">
    <property type="gene designation" value="Tedc2"/>
</dbReference>
<dbReference type="VEuPathDB" id="HostDB:ENSMUSG00000024118"/>
<dbReference type="eggNOG" id="ENOG502S5GP">
    <property type="taxonomic scope" value="Eukaryota"/>
</dbReference>
<dbReference type="GeneTree" id="ENSGT00390000011149"/>
<dbReference type="HOGENOM" id="CLU_052591_0_0_1"/>
<dbReference type="InParanoid" id="Q6GQV0"/>
<dbReference type="OMA" id="MLKAPYK"/>
<dbReference type="OrthoDB" id="9939072at2759"/>
<dbReference type="PhylomeDB" id="Q6GQV0"/>
<dbReference type="TreeFam" id="TF337397"/>
<dbReference type="BioGRID-ORCS" id="72016">
    <property type="hits" value="13 hits in 79 CRISPR screens"/>
</dbReference>
<dbReference type="ChiTaRS" id="Tedc2">
    <property type="organism name" value="mouse"/>
</dbReference>
<dbReference type="PRO" id="PR:Q6GQV0"/>
<dbReference type="Proteomes" id="UP000000589">
    <property type="component" value="Chromosome 17"/>
</dbReference>
<dbReference type="RNAct" id="Q6GQV0">
    <property type="molecule type" value="protein"/>
</dbReference>
<dbReference type="Bgee" id="ENSMUSG00000024118">
    <property type="expression patterns" value="Expressed in left lobe of liver and 163 other cell types or tissues"/>
</dbReference>
<dbReference type="ExpressionAtlas" id="Q6GQV0">
    <property type="expression patterns" value="baseline and differential"/>
</dbReference>
<dbReference type="GO" id="GO:0005814">
    <property type="term" value="C:centriole"/>
    <property type="evidence" value="ECO:0000314"/>
    <property type="project" value="UniProtKB"/>
</dbReference>
<dbReference type="GO" id="GO:0005929">
    <property type="term" value="C:cilium"/>
    <property type="evidence" value="ECO:0000314"/>
    <property type="project" value="UniProtKB"/>
</dbReference>
<dbReference type="GO" id="GO:0005737">
    <property type="term" value="C:cytoplasm"/>
    <property type="evidence" value="ECO:0007669"/>
    <property type="project" value="UniProtKB-KW"/>
</dbReference>
<dbReference type="GO" id="GO:0045880">
    <property type="term" value="P:positive regulation of smoothened signaling pathway"/>
    <property type="evidence" value="ECO:0000315"/>
    <property type="project" value="UniProtKB"/>
</dbReference>
<dbReference type="InterPro" id="IPR031518">
    <property type="entry name" value="DUF4693"/>
</dbReference>
<dbReference type="PANTHER" id="PTHR14870">
    <property type="entry name" value="TUBULIN EPSILON AND DELTA COMPLEX PROTEIN 2"/>
    <property type="match status" value="1"/>
</dbReference>
<dbReference type="PANTHER" id="PTHR14870:SF1">
    <property type="entry name" value="TUBULIN EPSILON AND DELTA COMPLEX PROTEIN 2"/>
    <property type="match status" value="1"/>
</dbReference>
<dbReference type="Pfam" id="PF15764">
    <property type="entry name" value="DUF4693"/>
    <property type="match status" value="1"/>
</dbReference>
<evidence type="ECO:0000250" key="1">
    <source>
        <dbReference type="UniProtKB" id="Q7L2K0"/>
    </source>
</evidence>
<evidence type="ECO:0000256" key="2">
    <source>
        <dbReference type="SAM" id="MobiDB-lite"/>
    </source>
</evidence>
<evidence type="ECO:0000269" key="3">
    <source>
    </source>
</evidence>
<evidence type="ECO:0000303" key="4">
    <source>
    </source>
</evidence>
<evidence type="ECO:0000303" key="5">
    <source>
    </source>
</evidence>
<evidence type="ECO:0000312" key="6">
    <source>
        <dbReference type="MGI" id="MGI:1919266"/>
    </source>
</evidence>
<organism>
    <name type="scientific">Mus musculus</name>
    <name type="common">Mouse</name>
    <dbReference type="NCBI Taxonomy" id="10090"/>
    <lineage>
        <taxon>Eukaryota</taxon>
        <taxon>Metazoa</taxon>
        <taxon>Chordata</taxon>
        <taxon>Craniata</taxon>
        <taxon>Vertebrata</taxon>
        <taxon>Euteleostomi</taxon>
        <taxon>Mammalia</taxon>
        <taxon>Eutheria</taxon>
        <taxon>Euarchontoglires</taxon>
        <taxon>Glires</taxon>
        <taxon>Rodentia</taxon>
        <taxon>Myomorpha</taxon>
        <taxon>Muroidea</taxon>
        <taxon>Muridae</taxon>
        <taxon>Murinae</taxon>
        <taxon>Mus</taxon>
        <taxon>Mus</taxon>
    </lineage>
</organism>
<sequence>MLGVKGNYLLPADCAHRLVAELQGALDSCADRQRQLERSLRVSRRLLQVWEPARTPSPVPETKEEDPSPACAPSSQDLEELELLTQALEKAVRVRKGVSNAGQRDRTPTLTSKAATSGAAAASHPRAPSRGGSRVLGTRSTKGIQRATAPPKDYPEHRLRSKGDKTHVRTQDQTTGYGPDLRDQQMTPSSAHHTTELFALKEKGTLLQLPEDFRKAVSRNSCLWAQLNSARTNDSTDATRAAKTQFLHKLQMASGCSSHRPSATEVEAHARILRKACMLLRLRMQKELAIAPTDWMQEYRCLLTLEGLQTVVGQCLHRIQVLQAAVTEQLPGECLAETRTQASSVCGGEVDSACSPELLLYASTEELQTLATLKLQVALLHQQIHLEKVLMAELLPLINTQDPGGPPWLALCRAAYSLLCEGGERFLTVLRDDPAD</sequence>
<gene>
    <name evidence="6" type="primary">Tedc2</name>
</gene>
<reference key="1">
    <citation type="journal article" date="2005" name="Science">
        <title>The transcriptional landscape of the mammalian genome.</title>
        <authorList>
            <person name="Carninci P."/>
            <person name="Kasukawa T."/>
            <person name="Katayama S."/>
            <person name="Gough J."/>
            <person name="Frith M.C."/>
            <person name="Maeda N."/>
            <person name="Oyama R."/>
            <person name="Ravasi T."/>
            <person name="Lenhard B."/>
            <person name="Wells C."/>
            <person name="Kodzius R."/>
            <person name="Shimokawa K."/>
            <person name="Bajic V.B."/>
            <person name="Brenner S.E."/>
            <person name="Batalov S."/>
            <person name="Forrest A.R."/>
            <person name="Zavolan M."/>
            <person name="Davis M.J."/>
            <person name="Wilming L.G."/>
            <person name="Aidinis V."/>
            <person name="Allen J.E."/>
            <person name="Ambesi-Impiombato A."/>
            <person name="Apweiler R."/>
            <person name="Aturaliya R.N."/>
            <person name="Bailey T.L."/>
            <person name="Bansal M."/>
            <person name="Baxter L."/>
            <person name="Beisel K.W."/>
            <person name="Bersano T."/>
            <person name="Bono H."/>
            <person name="Chalk A.M."/>
            <person name="Chiu K.P."/>
            <person name="Choudhary V."/>
            <person name="Christoffels A."/>
            <person name="Clutterbuck D.R."/>
            <person name="Crowe M.L."/>
            <person name="Dalla E."/>
            <person name="Dalrymple B.P."/>
            <person name="de Bono B."/>
            <person name="Della Gatta G."/>
            <person name="di Bernardo D."/>
            <person name="Down T."/>
            <person name="Engstrom P."/>
            <person name="Fagiolini M."/>
            <person name="Faulkner G."/>
            <person name="Fletcher C.F."/>
            <person name="Fukushima T."/>
            <person name="Furuno M."/>
            <person name="Futaki S."/>
            <person name="Gariboldi M."/>
            <person name="Georgii-Hemming P."/>
            <person name="Gingeras T.R."/>
            <person name="Gojobori T."/>
            <person name="Green R.E."/>
            <person name="Gustincich S."/>
            <person name="Harbers M."/>
            <person name="Hayashi Y."/>
            <person name="Hensch T.K."/>
            <person name="Hirokawa N."/>
            <person name="Hill D."/>
            <person name="Huminiecki L."/>
            <person name="Iacono M."/>
            <person name="Ikeo K."/>
            <person name="Iwama A."/>
            <person name="Ishikawa T."/>
            <person name="Jakt M."/>
            <person name="Kanapin A."/>
            <person name="Katoh M."/>
            <person name="Kawasawa Y."/>
            <person name="Kelso J."/>
            <person name="Kitamura H."/>
            <person name="Kitano H."/>
            <person name="Kollias G."/>
            <person name="Krishnan S.P."/>
            <person name="Kruger A."/>
            <person name="Kummerfeld S.K."/>
            <person name="Kurochkin I.V."/>
            <person name="Lareau L.F."/>
            <person name="Lazarevic D."/>
            <person name="Lipovich L."/>
            <person name="Liu J."/>
            <person name="Liuni S."/>
            <person name="McWilliam S."/>
            <person name="Madan Babu M."/>
            <person name="Madera M."/>
            <person name="Marchionni L."/>
            <person name="Matsuda H."/>
            <person name="Matsuzawa S."/>
            <person name="Miki H."/>
            <person name="Mignone F."/>
            <person name="Miyake S."/>
            <person name="Morris K."/>
            <person name="Mottagui-Tabar S."/>
            <person name="Mulder N."/>
            <person name="Nakano N."/>
            <person name="Nakauchi H."/>
            <person name="Ng P."/>
            <person name="Nilsson R."/>
            <person name="Nishiguchi S."/>
            <person name="Nishikawa S."/>
            <person name="Nori F."/>
            <person name="Ohara O."/>
            <person name="Okazaki Y."/>
            <person name="Orlando V."/>
            <person name="Pang K.C."/>
            <person name="Pavan W.J."/>
            <person name="Pavesi G."/>
            <person name="Pesole G."/>
            <person name="Petrovsky N."/>
            <person name="Piazza S."/>
            <person name="Reed J."/>
            <person name="Reid J.F."/>
            <person name="Ring B.Z."/>
            <person name="Ringwald M."/>
            <person name="Rost B."/>
            <person name="Ruan Y."/>
            <person name="Salzberg S.L."/>
            <person name="Sandelin A."/>
            <person name="Schneider C."/>
            <person name="Schoenbach C."/>
            <person name="Sekiguchi K."/>
            <person name="Semple C.A."/>
            <person name="Seno S."/>
            <person name="Sessa L."/>
            <person name="Sheng Y."/>
            <person name="Shibata Y."/>
            <person name="Shimada H."/>
            <person name="Shimada K."/>
            <person name="Silva D."/>
            <person name="Sinclair B."/>
            <person name="Sperling S."/>
            <person name="Stupka E."/>
            <person name="Sugiura K."/>
            <person name="Sultana R."/>
            <person name="Takenaka Y."/>
            <person name="Taki K."/>
            <person name="Tammoja K."/>
            <person name="Tan S.L."/>
            <person name="Tang S."/>
            <person name="Taylor M.S."/>
            <person name="Tegner J."/>
            <person name="Teichmann S.A."/>
            <person name="Ueda H.R."/>
            <person name="van Nimwegen E."/>
            <person name="Verardo R."/>
            <person name="Wei C.L."/>
            <person name="Yagi K."/>
            <person name="Yamanishi H."/>
            <person name="Zabarovsky E."/>
            <person name="Zhu S."/>
            <person name="Zimmer A."/>
            <person name="Hide W."/>
            <person name="Bult C."/>
            <person name="Grimmond S.M."/>
            <person name="Teasdale R.D."/>
            <person name="Liu E.T."/>
            <person name="Brusic V."/>
            <person name="Quackenbush J."/>
            <person name="Wahlestedt C."/>
            <person name="Mattick J.S."/>
            <person name="Hume D.A."/>
            <person name="Kai C."/>
            <person name="Sasaki D."/>
            <person name="Tomaru Y."/>
            <person name="Fukuda S."/>
            <person name="Kanamori-Katayama M."/>
            <person name="Suzuki M."/>
            <person name="Aoki J."/>
            <person name="Arakawa T."/>
            <person name="Iida J."/>
            <person name="Imamura K."/>
            <person name="Itoh M."/>
            <person name="Kato T."/>
            <person name="Kawaji H."/>
            <person name="Kawagashira N."/>
            <person name="Kawashima T."/>
            <person name="Kojima M."/>
            <person name="Kondo S."/>
            <person name="Konno H."/>
            <person name="Nakano K."/>
            <person name="Ninomiya N."/>
            <person name="Nishio T."/>
            <person name="Okada M."/>
            <person name="Plessy C."/>
            <person name="Shibata K."/>
            <person name="Shiraki T."/>
            <person name="Suzuki S."/>
            <person name="Tagami M."/>
            <person name="Waki K."/>
            <person name="Watahiki A."/>
            <person name="Okamura-Oho Y."/>
            <person name="Suzuki H."/>
            <person name="Kawai J."/>
            <person name="Hayashizaki Y."/>
        </authorList>
    </citation>
    <scope>NUCLEOTIDE SEQUENCE [LARGE SCALE MRNA] (ISOFORMS 1 AND 2)</scope>
    <source>
        <strain>C57BL/6J</strain>
        <tissue>Embryonic liver</tissue>
        <tissue>Placenta</tissue>
    </source>
</reference>
<reference key="2">
    <citation type="journal article" date="2004" name="Genome Res.">
        <title>The status, quality, and expansion of the NIH full-length cDNA project: the Mammalian Gene Collection (MGC).</title>
        <authorList>
            <consortium name="The MGC Project Team"/>
        </authorList>
    </citation>
    <scope>NUCLEOTIDE SEQUENCE [LARGE SCALE MRNA] (ISOFORM 1)</scope>
    <source>
        <strain>C57BL/6J</strain>
        <tissue>Embryonic brain</tissue>
    </source>
</reference>
<reference key="3">
    <citation type="journal article" date="2018" name="Nat. Genet.">
        <title>A CRISPR-based screen for Hedgehog signaling provides insights into ciliary function and ciliopathies.</title>
        <authorList>
            <person name="Breslow D.K."/>
            <person name="Hoogendoorn S."/>
            <person name="Kopp A.R."/>
            <person name="Morgens D.W."/>
            <person name="Vu B.K."/>
            <person name="Kennedy M.C."/>
            <person name="Han K."/>
            <person name="Li A."/>
            <person name="Hess G.T."/>
            <person name="Bassik M.C."/>
            <person name="Chen J.K."/>
            <person name="Nachury M.V."/>
        </authorList>
    </citation>
    <scope>SUBCELLULAR LOCATION</scope>
    <scope>FUNCTION</scope>
    <scope>INTERACTION WITH TEDC1</scope>
    <scope>SUBUNIT</scope>
    <scope>IDENTIFICATION BY MASS SPECTROMETRY</scope>
</reference>
<comment type="function">
    <text evidence="3">Acts as a positive regulator of ciliary hedgehog signaling. Required for centriole stability.</text>
</comment>
<comment type="subunit">
    <text evidence="3">Interacts with TEDC1 (PubMed:29459677). Found in a complex with TEDC1, TEDC2, TUBE1 and TUBD1 (PubMed:29459677).</text>
</comment>
<comment type="subcellular location">
    <subcellularLocation>
        <location evidence="3">Cell projection</location>
        <location evidence="3">Cilium</location>
    </subcellularLocation>
    <subcellularLocation>
        <location evidence="3">Cytoplasm</location>
        <location evidence="3">Cytoskeleton</location>
        <location evidence="3">Microtubule organizing center</location>
        <location evidence="3">Centrosome</location>
        <location evidence="3">Centriole</location>
    </subcellularLocation>
</comment>
<comment type="alternative products">
    <event type="alternative splicing"/>
    <isoform>
        <id>Q6GQV0-1</id>
        <name>1</name>
        <sequence type="displayed"/>
    </isoform>
    <isoform>
        <id>Q6GQV0-2</id>
        <name>2</name>
        <sequence type="described" ref="VSP_025089"/>
    </isoform>
</comment>
<keyword id="KW-0025">Alternative splicing</keyword>
<keyword id="KW-0966">Cell projection</keyword>
<keyword id="KW-0963">Cytoplasm</keyword>
<keyword id="KW-0206">Cytoskeleton</keyword>
<keyword id="KW-0597">Phosphoprotein</keyword>
<keyword id="KW-1185">Reference proteome</keyword>
<feature type="chain" id="PRO_0000286558" description="Tubulin epsilon and delta complex protein 2">
    <location>
        <begin position="1"/>
        <end position="436"/>
    </location>
</feature>
<feature type="region of interest" description="Disordered" evidence="2">
    <location>
        <begin position="53"/>
        <end position="76"/>
    </location>
</feature>
<feature type="region of interest" description="Disordered" evidence="2">
    <location>
        <begin position="94"/>
        <end position="191"/>
    </location>
</feature>
<feature type="compositionally biased region" description="Low complexity" evidence="2">
    <location>
        <begin position="111"/>
        <end position="131"/>
    </location>
</feature>
<feature type="compositionally biased region" description="Basic and acidic residues" evidence="2">
    <location>
        <begin position="153"/>
        <end position="170"/>
    </location>
</feature>
<feature type="modified residue" description="Phosphoserine" evidence="1">
    <location>
        <position position="161"/>
    </location>
</feature>
<feature type="splice variant" id="VSP_025089" description="In isoform 2." evidence="4">
    <location>
        <begin position="1"/>
        <end position="185"/>
    </location>
</feature>
<name>TEDC2_MOUSE</name>